<accession>B0VNZ8</accession>
<comment type="function">
    <text evidence="1">Cell wall formation.</text>
</comment>
<comment type="catalytic activity">
    <reaction evidence="1">
        <text>UDP-N-acetyl-alpha-D-muramate + L-alanine + ATP = UDP-N-acetyl-alpha-D-muramoyl-L-alanine + ADP + phosphate + H(+)</text>
        <dbReference type="Rhea" id="RHEA:23372"/>
        <dbReference type="ChEBI" id="CHEBI:15378"/>
        <dbReference type="ChEBI" id="CHEBI:30616"/>
        <dbReference type="ChEBI" id="CHEBI:43474"/>
        <dbReference type="ChEBI" id="CHEBI:57972"/>
        <dbReference type="ChEBI" id="CHEBI:70757"/>
        <dbReference type="ChEBI" id="CHEBI:83898"/>
        <dbReference type="ChEBI" id="CHEBI:456216"/>
        <dbReference type="EC" id="6.3.2.8"/>
    </reaction>
</comment>
<comment type="pathway">
    <text evidence="1">Cell wall biogenesis; peptidoglycan biosynthesis.</text>
</comment>
<comment type="subcellular location">
    <subcellularLocation>
        <location evidence="1">Cytoplasm</location>
    </subcellularLocation>
</comment>
<comment type="similarity">
    <text evidence="1">Belongs to the MurCDEF family.</text>
</comment>
<keyword id="KW-0067">ATP-binding</keyword>
<keyword id="KW-0131">Cell cycle</keyword>
<keyword id="KW-0132">Cell division</keyword>
<keyword id="KW-0133">Cell shape</keyword>
<keyword id="KW-0961">Cell wall biogenesis/degradation</keyword>
<keyword id="KW-0963">Cytoplasm</keyword>
<keyword id="KW-0436">Ligase</keyword>
<keyword id="KW-0547">Nucleotide-binding</keyword>
<keyword id="KW-0573">Peptidoglycan synthesis</keyword>
<organism>
    <name type="scientific">Acinetobacter baumannii (strain SDF)</name>
    <dbReference type="NCBI Taxonomy" id="509170"/>
    <lineage>
        <taxon>Bacteria</taxon>
        <taxon>Pseudomonadati</taxon>
        <taxon>Pseudomonadota</taxon>
        <taxon>Gammaproteobacteria</taxon>
        <taxon>Moraxellales</taxon>
        <taxon>Moraxellaceae</taxon>
        <taxon>Acinetobacter</taxon>
        <taxon>Acinetobacter calcoaceticus/baumannii complex</taxon>
    </lineage>
</organism>
<dbReference type="EC" id="6.3.2.8" evidence="1"/>
<dbReference type="EMBL" id="CU468230">
    <property type="protein sequence ID" value="CAP02734.1"/>
    <property type="molecule type" value="Genomic_DNA"/>
</dbReference>
<dbReference type="SMR" id="B0VNZ8"/>
<dbReference type="KEGG" id="abm:ABSDF3471"/>
<dbReference type="HOGENOM" id="CLU_028104_2_2_6"/>
<dbReference type="UniPathway" id="UPA00219"/>
<dbReference type="Proteomes" id="UP000001741">
    <property type="component" value="Chromosome"/>
</dbReference>
<dbReference type="GO" id="GO:0005737">
    <property type="term" value="C:cytoplasm"/>
    <property type="evidence" value="ECO:0007669"/>
    <property type="project" value="UniProtKB-SubCell"/>
</dbReference>
<dbReference type="GO" id="GO:0005524">
    <property type="term" value="F:ATP binding"/>
    <property type="evidence" value="ECO:0007669"/>
    <property type="project" value="UniProtKB-UniRule"/>
</dbReference>
<dbReference type="GO" id="GO:0008763">
    <property type="term" value="F:UDP-N-acetylmuramate-L-alanine ligase activity"/>
    <property type="evidence" value="ECO:0007669"/>
    <property type="project" value="UniProtKB-UniRule"/>
</dbReference>
<dbReference type="GO" id="GO:0051301">
    <property type="term" value="P:cell division"/>
    <property type="evidence" value="ECO:0007669"/>
    <property type="project" value="UniProtKB-KW"/>
</dbReference>
<dbReference type="GO" id="GO:0071555">
    <property type="term" value="P:cell wall organization"/>
    <property type="evidence" value="ECO:0007669"/>
    <property type="project" value="UniProtKB-KW"/>
</dbReference>
<dbReference type="GO" id="GO:0009252">
    <property type="term" value="P:peptidoglycan biosynthetic process"/>
    <property type="evidence" value="ECO:0007669"/>
    <property type="project" value="UniProtKB-UniRule"/>
</dbReference>
<dbReference type="GO" id="GO:0008360">
    <property type="term" value="P:regulation of cell shape"/>
    <property type="evidence" value="ECO:0007669"/>
    <property type="project" value="UniProtKB-KW"/>
</dbReference>
<dbReference type="FunFam" id="3.40.1190.10:FF:000001">
    <property type="entry name" value="UDP-N-acetylmuramate--L-alanine ligase"/>
    <property type="match status" value="1"/>
</dbReference>
<dbReference type="FunFam" id="3.40.50.720:FF:000046">
    <property type="entry name" value="UDP-N-acetylmuramate--L-alanine ligase"/>
    <property type="match status" value="1"/>
</dbReference>
<dbReference type="Gene3D" id="3.90.190.20">
    <property type="entry name" value="Mur ligase, C-terminal domain"/>
    <property type="match status" value="1"/>
</dbReference>
<dbReference type="Gene3D" id="3.40.1190.10">
    <property type="entry name" value="Mur-like, catalytic domain"/>
    <property type="match status" value="1"/>
</dbReference>
<dbReference type="Gene3D" id="3.40.50.720">
    <property type="entry name" value="NAD(P)-binding Rossmann-like Domain"/>
    <property type="match status" value="1"/>
</dbReference>
<dbReference type="HAMAP" id="MF_00046">
    <property type="entry name" value="MurC"/>
    <property type="match status" value="1"/>
</dbReference>
<dbReference type="InterPro" id="IPR036565">
    <property type="entry name" value="Mur-like_cat_sf"/>
</dbReference>
<dbReference type="InterPro" id="IPR004101">
    <property type="entry name" value="Mur_ligase_C"/>
</dbReference>
<dbReference type="InterPro" id="IPR036615">
    <property type="entry name" value="Mur_ligase_C_dom_sf"/>
</dbReference>
<dbReference type="InterPro" id="IPR013221">
    <property type="entry name" value="Mur_ligase_cen"/>
</dbReference>
<dbReference type="InterPro" id="IPR000713">
    <property type="entry name" value="Mur_ligase_N"/>
</dbReference>
<dbReference type="InterPro" id="IPR050061">
    <property type="entry name" value="MurCDEF_pg_biosynth"/>
</dbReference>
<dbReference type="InterPro" id="IPR005758">
    <property type="entry name" value="UDP-N-AcMur_Ala_ligase_MurC"/>
</dbReference>
<dbReference type="NCBIfam" id="TIGR01082">
    <property type="entry name" value="murC"/>
    <property type="match status" value="1"/>
</dbReference>
<dbReference type="PANTHER" id="PTHR43445:SF3">
    <property type="entry name" value="UDP-N-ACETYLMURAMATE--L-ALANINE LIGASE"/>
    <property type="match status" value="1"/>
</dbReference>
<dbReference type="PANTHER" id="PTHR43445">
    <property type="entry name" value="UDP-N-ACETYLMURAMATE--L-ALANINE LIGASE-RELATED"/>
    <property type="match status" value="1"/>
</dbReference>
<dbReference type="Pfam" id="PF01225">
    <property type="entry name" value="Mur_ligase"/>
    <property type="match status" value="1"/>
</dbReference>
<dbReference type="Pfam" id="PF02875">
    <property type="entry name" value="Mur_ligase_C"/>
    <property type="match status" value="1"/>
</dbReference>
<dbReference type="Pfam" id="PF08245">
    <property type="entry name" value="Mur_ligase_M"/>
    <property type="match status" value="1"/>
</dbReference>
<dbReference type="SUPFAM" id="SSF51984">
    <property type="entry name" value="MurCD N-terminal domain"/>
    <property type="match status" value="1"/>
</dbReference>
<dbReference type="SUPFAM" id="SSF53623">
    <property type="entry name" value="MurD-like peptide ligases, catalytic domain"/>
    <property type="match status" value="1"/>
</dbReference>
<dbReference type="SUPFAM" id="SSF53244">
    <property type="entry name" value="MurD-like peptide ligases, peptide-binding domain"/>
    <property type="match status" value="1"/>
</dbReference>
<evidence type="ECO:0000255" key="1">
    <source>
        <dbReference type="HAMAP-Rule" id="MF_00046"/>
    </source>
</evidence>
<reference key="1">
    <citation type="journal article" date="2008" name="PLoS ONE">
        <title>Comparative analysis of Acinetobacters: three genomes for three lifestyles.</title>
        <authorList>
            <person name="Vallenet D."/>
            <person name="Nordmann P."/>
            <person name="Barbe V."/>
            <person name="Poirel L."/>
            <person name="Mangenot S."/>
            <person name="Bataille E."/>
            <person name="Dossat C."/>
            <person name="Gas S."/>
            <person name="Kreimeyer A."/>
            <person name="Lenoble P."/>
            <person name="Oztas S."/>
            <person name="Poulain J."/>
            <person name="Segurens B."/>
            <person name="Robert C."/>
            <person name="Abergel C."/>
            <person name="Claverie J.-M."/>
            <person name="Raoult D."/>
            <person name="Medigue C."/>
            <person name="Weissenbach J."/>
            <person name="Cruveiller S."/>
        </authorList>
    </citation>
    <scope>NUCLEOTIDE SEQUENCE [LARGE SCALE GENOMIC DNA]</scope>
    <source>
        <strain>SDF</strain>
    </source>
</reference>
<proteinExistence type="inferred from homology"/>
<sequence length="482" mass="52896">MSPTTAANQAKKLIKVPEMRRIKHIHFVGIGGAGMCGIAEVLANQGYKISGSDINASKTTQQLEENGIKVYIGHEAENIKNANVLVVSTAIDPENPEVKAAIEQRIPIVRRAEMLGELMRYRHGIAVAGTHGKTTTTSLLTTMLAEENLDPTYVIGGLLNSTGVNAALGESRFIVAEADESDASFLYLQPMAAIVTNIDADHMDTYEGSFDKLKDTFVQFLHNLPFYGLAVVCGDDANIREILPRVGRPVITYGFNEDNDIRAIDVERDGMRSHFTVLRKGREPLRLTINQPGLHNVLNALAAIGVATDEGVSDEAISRALKGFSGVGRRFQVQGEFELGEGNVKLVDDYGHHPKEVEATIKAARQSHPDRRLVMLFQPHRYSRTRDCFDDFIEVLSQVDQLLLLEVYPAGEKPIVGADSRTLARSIRLRGQVEPILIDPVEGNLQNIMQNVLQPNDLLLTQGAGNVGAISVELAQHHLYVK</sequence>
<name>MURC_ACIBS</name>
<gene>
    <name evidence="1" type="primary">murC</name>
    <name type="ordered locus">ABSDF3471</name>
</gene>
<feature type="chain" id="PRO_1000091070" description="UDP-N-acetylmuramate--L-alanine ligase">
    <location>
        <begin position="1"/>
        <end position="482"/>
    </location>
</feature>
<feature type="binding site" evidence="1">
    <location>
        <begin position="129"/>
        <end position="135"/>
    </location>
    <ligand>
        <name>ATP</name>
        <dbReference type="ChEBI" id="CHEBI:30616"/>
    </ligand>
</feature>
<protein>
    <recommendedName>
        <fullName evidence="1">UDP-N-acetylmuramate--L-alanine ligase</fullName>
        <ecNumber evidence="1">6.3.2.8</ecNumber>
    </recommendedName>
    <alternativeName>
        <fullName evidence="1">UDP-N-acetylmuramoyl-L-alanine synthetase</fullName>
    </alternativeName>
</protein>